<gene>
    <name evidence="1" type="primary">eif1a</name>
    <name type="ordered locus">PTO0253</name>
</gene>
<reference key="1">
    <citation type="journal article" date="2004" name="Proc. Natl. Acad. Sci. U.S.A.">
        <title>Genome sequence of Picrophilus torridus and its implications for life around pH 0.</title>
        <authorList>
            <person name="Fuetterer O."/>
            <person name="Angelov A."/>
            <person name="Liesegang H."/>
            <person name="Gottschalk G."/>
            <person name="Schleper C."/>
            <person name="Schepers B."/>
            <person name="Dock C."/>
            <person name="Antranikian G."/>
            <person name="Liebl W."/>
        </authorList>
    </citation>
    <scope>NUCLEOTIDE SEQUENCE [LARGE SCALE GENOMIC DNA]</scope>
    <source>
        <strain>ATCC 700027 / DSM 9790 / JCM 10055 / NBRC 100828 / KAW 2/3</strain>
    </source>
</reference>
<name>IF1A_PICTO</name>
<feature type="chain" id="PRO_0000145127" description="Translation initiation factor 1A">
    <location>
        <begin position="1"/>
        <end position="108"/>
    </location>
</feature>
<feature type="domain" description="S1-like" evidence="1">
    <location>
        <begin position="10"/>
        <end position="84"/>
    </location>
</feature>
<proteinExistence type="inferred from homology"/>
<keyword id="KW-0396">Initiation factor</keyword>
<keyword id="KW-0648">Protein biosynthesis</keyword>
<protein>
    <recommendedName>
        <fullName evidence="1">Translation initiation factor 1A</fullName>
        <shortName evidence="1">aIF-1A</shortName>
    </recommendedName>
</protein>
<comment type="function">
    <text evidence="1">Seems to be required for maximal rate of protein biosynthesis. Enhances ribosome dissociation into subunits and stabilizes the binding of the initiator Met-tRNA(I) to 40 S ribosomal subunits.</text>
</comment>
<comment type="similarity">
    <text evidence="1">Belongs to the eIF-1A family.</text>
</comment>
<sequence>MDNDNDENTIRVITPNKKSGEIYGIVEKMSGASRLIVMCEDGVTRNCRIPGKMKKRMWIREGDLVIVKPWEFQDEKGDIIYRYTKTQAAYLSRNHMLPEIIDVFNEKQ</sequence>
<evidence type="ECO:0000255" key="1">
    <source>
        <dbReference type="HAMAP-Rule" id="MF_00216"/>
    </source>
</evidence>
<dbReference type="EMBL" id="AE017261">
    <property type="protein sequence ID" value="AAT42838.1"/>
    <property type="molecule type" value="Genomic_DNA"/>
</dbReference>
<dbReference type="RefSeq" id="WP_011177054.1">
    <property type="nucleotide sequence ID" value="NC_005877.1"/>
</dbReference>
<dbReference type="SMR" id="Q6L2G4"/>
<dbReference type="FunCoup" id="Q6L2G4">
    <property type="interactions" value="164"/>
</dbReference>
<dbReference type="STRING" id="263820.PTO0253"/>
<dbReference type="PaxDb" id="263820-PTO0253"/>
<dbReference type="GeneID" id="2844146"/>
<dbReference type="KEGG" id="pto:PTO0253"/>
<dbReference type="PATRIC" id="fig|263820.9.peg.271"/>
<dbReference type="eggNOG" id="arCOG01179">
    <property type="taxonomic scope" value="Archaea"/>
</dbReference>
<dbReference type="HOGENOM" id="CLU_109098_1_2_2"/>
<dbReference type="InParanoid" id="Q6L2G4"/>
<dbReference type="OrthoDB" id="2586at2157"/>
<dbReference type="Proteomes" id="UP000000438">
    <property type="component" value="Chromosome"/>
</dbReference>
<dbReference type="GO" id="GO:0003723">
    <property type="term" value="F:RNA binding"/>
    <property type="evidence" value="ECO:0007669"/>
    <property type="project" value="InterPro"/>
</dbReference>
<dbReference type="GO" id="GO:0003743">
    <property type="term" value="F:translation initiation factor activity"/>
    <property type="evidence" value="ECO:0007669"/>
    <property type="project" value="UniProtKB-UniRule"/>
</dbReference>
<dbReference type="CDD" id="cd05793">
    <property type="entry name" value="S1_IF1A"/>
    <property type="match status" value="1"/>
</dbReference>
<dbReference type="Gene3D" id="2.40.50.140">
    <property type="entry name" value="Nucleic acid-binding proteins"/>
    <property type="match status" value="1"/>
</dbReference>
<dbReference type="HAMAP" id="MF_00216">
    <property type="entry name" value="aIF_1A"/>
    <property type="match status" value="1"/>
</dbReference>
<dbReference type="InterPro" id="IPR012340">
    <property type="entry name" value="NA-bd_OB-fold"/>
</dbReference>
<dbReference type="InterPro" id="IPR006196">
    <property type="entry name" value="RNA-binding_domain_S1_IF1"/>
</dbReference>
<dbReference type="InterPro" id="IPR001253">
    <property type="entry name" value="TIF_eIF-1A"/>
</dbReference>
<dbReference type="InterPro" id="IPR018104">
    <property type="entry name" value="TIF_eIF-1A_CS"/>
</dbReference>
<dbReference type="NCBIfam" id="TIGR00523">
    <property type="entry name" value="eIF-1A"/>
    <property type="match status" value="1"/>
</dbReference>
<dbReference type="NCBIfam" id="NF003084">
    <property type="entry name" value="PRK04012.1-3"/>
    <property type="match status" value="1"/>
</dbReference>
<dbReference type="NCBIfam" id="NF003085">
    <property type="entry name" value="PRK04012.1-5"/>
    <property type="match status" value="1"/>
</dbReference>
<dbReference type="PANTHER" id="PTHR21668">
    <property type="entry name" value="EIF-1A"/>
    <property type="match status" value="1"/>
</dbReference>
<dbReference type="Pfam" id="PF01176">
    <property type="entry name" value="eIF-1a"/>
    <property type="match status" value="1"/>
</dbReference>
<dbReference type="SMART" id="SM00652">
    <property type="entry name" value="eIF1a"/>
    <property type="match status" value="1"/>
</dbReference>
<dbReference type="SUPFAM" id="SSF50249">
    <property type="entry name" value="Nucleic acid-binding proteins"/>
    <property type="match status" value="1"/>
</dbReference>
<dbReference type="PROSITE" id="PS01262">
    <property type="entry name" value="IF1A"/>
    <property type="match status" value="1"/>
</dbReference>
<dbReference type="PROSITE" id="PS50832">
    <property type="entry name" value="S1_IF1_TYPE"/>
    <property type="match status" value="1"/>
</dbReference>
<organism>
    <name type="scientific">Picrophilus torridus (strain ATCC 700027 / DSM 9790 / JCM 10055 / NBRC 100828 / KAW 2/3)</name>
    <dbReference type="NCBI Taxonomy" id="1122961"/>
    <lineage>
        <taxon>Archaea</taxon>
        <taxon>Methanobacteriati</taxon>
        <taxon>Thermoplasmatota</taxon>
        <taxon>Thermoplasmata</taxon>
        <taxon>Thermoplasmatales</taxon>
        <taxon>Picrophilaceae</taxon>
        <taxon>Picrophilus</taxon>
    </lineage>
</organism>
<accession>Q6L2G4</accession>